<gene>
    <name type="primary">Plod1</name>
    <name type="synonym">Plod</name>
</gene>
<comment type="function">
    <text evidence="2 3 6">Part of a complex composed of PLOD1, P3H3 and P3H4 that catalyzes hydroxylation of lysine residues in collagen alpha chains and is required for normal assembly and cross-linkling of collagen fibrils (By similarity). Forms hydroxylysine residues in -Xaa-Lys-Gly- sequences in collagens (PubMed:7578263). These hydroxylysines serve as sites of attachment for carbohydrate units and are essential for the stability of the intermolecular collagen cross-links (By similarity).</text>
</comment>
<comment type="catalytic activity">
    <reaction evidence="6">
        <text>L-lysyl-[collagen] + 2-oxoglutarate + O2 = (5R)-5-hydroxy-L-lysyl-[collagen] + succinate + CO2</text>
        <dbReference type="Rhea" id="RHEA:16569"/>
        <dbReference type="Rhea" id="RHEA-COMP:12751"/>
        <dbReference type="Rhea" id="RHEA-COMP:12752"/>
        <dbReference type="ChEBI" id="CHEBI:15379"/>
        <dbReference type="ChEBI" id="CHEBI:16526"/>
        <dbReference type="ChEBI" id="CHEBI:16810"/>
        <dbReference type="ChEBI" id="CHEBI:29969"/>
        <dbReference type="ChEBI" id="CHEBI:30031"/>
        <dbReference type="ChEBI" id="CHEBI:133442"/>
        <dbReference type="EC" id="1.14.11.4"/>
    </reaction>
</comment>
<comment type="cofactor">
    <cofactor evidence="2">
        <name>Fe(2+)</name>
        <dbReference type="ChEBI" id="CHEBI:29033"/>
    </cofactor>
</comment>
<comment type="cofactor">
    <cofactor evidence="2">
        <name>L-ascorbate</name>
        <dbReference type="ChEBI" id="CHEBI:38290"/>
    </cofactor>
</comment>
<comment type="subunit">
    <text evidence="2 3">Homodimer (By similarity). Identified in a complex with P3H3 and P3H4 (By similarity).</text>
</comment>
<comment type="subcellular location">
    <subcellularLocation>
        <location>Rough endoplasmic reticulum membrane</location>
        <topology>Peripheral membrane protein</topology>
        <orientation>Lumenal side</orientation>
    </subcellularLocation>
</comment>
<accession>Q63321</accession>
<protein>
    <recommendedName>
        <fullName>Procollagen-lysine,2-oxoglutarate 5-dioxygenase 1</fullName>
        <ecNumber evidence="6">1.14.11.4</ecNumber>
    </recommendedName>
    <alternativeName>
        <fullName>Lysyl hydroxylase 1</fullName>
        <shortName>LH1</shortName>
    </alternativeName>
</protein>
<dbReference type="EC" id="1.14.11.4" evidence="6"/>
<dbReference type="EMBL" id="L25331">
    <property type="protein sequence ID" value="AAA41550.1"/>
    <property type="molecule type" value="mRNA"/>
</dbReference>
<dbReference type="PIR" id="S59964">
    <property type="entry name" value="S59964"/>
</dbReference>
<dbReference type="SMR" id="Q63321"/>
<dbReference type="FunCoup" id="Q63321">
    <property type="interactions" value="562"/>
</dbReference>
<dbReference type="IntAct" id="Q63321">
    <property type="interactions" value="1"/>
</dbReference>
<dbReference type="STRING" id="10116.ENSRNOP00000010433"/>
<dbReference type="GlyCosmos" id="Q63321">
    <property type="glycosylation" value="4 sites, No reported glycans"/>
</dbReference>
<dbReference type="GlyGen" id="Q63321">
    <property type="glycosylation" value="4 sites"/>
</dbReference>
<dbReference type="PhosphoSitePlus" id="Q63321"/>
<dbReference type="jPOST" id="Q63321"/>
<dbReference type="PaxDb" id="10116-ENSRNOP00000010433"/>
<dbReference type="UCSC" id="RGD:621382">
    <property type="organism name" value="rat"/>
</dbReference>
<dbReference type="AGR" id="RGD:621382"/>
<dbReference type="RGD" id="621382">
    <property type="gene designation" value="Plod1"/>
</dbReference>
<dbReference type="eggNOG" id="KOG1971">
    <property type="taxonomic scope" value="Eukaryota"/>
</dbReference>
<dbReference type="InParanoid" id="Q63321"/>
<dbReference type="PhylomeDB" id="Q63321"/>
<dbReference type="BRENDA" id="1.14.11.4">
    <property type="organism ID" value="5301"/>
</dbReference>
<dbReference type="Reactome" id="R-RNO-1650814">
    <property type="pathway name" value="Collagen biosynthesis and modifying enzymes"/>
</dbReference>
<dbReference type="PRO" id="PR:Q63321"/>
<dbReference type="Proteomes" id="UP000002494">
    <property type="component" value="Unplaced"/>
</dbReference>
<dbReference type="GO" id="GO:1902494">
    <property type="term" value="C:catalytic complex"/>
    <property type="evidence" value="ECO:0000266"/>
    <property type="project" value="RGD"/>
</dbReference>
<dbReference type="GO" id="GO:0062023">
    <property type="term" value="C:collagen-containing extracellular matrix"/>
    <property type="evidence" value="ECO:0000318"/>
    <property type="project" value="GO_Central"/>
</dbReference>
<dbReference type="GO" id="GO:0005783">
    <property type="term" value="C:endoplasmic reticulum"/>
    <property type="evidence" value="ECO:0000318"/>
    <property type="project" value="GO_Central"/>
</dbReference>
<dbReference type="GO" id="GO:0005615">
    <property type="term" value="C:extracellular space"/>
    <property type="evidence" value="ECO:0000318"/>
    <property type="project" value="GO_Central"/>
</dbReference>
<dbReference type="GO" id="GO:0005794">
    <property type="term" value="C:Golgi apparatus"/>
    <property type="evidence" value="ECO:0000318"/>
    <property type="project" value="GO_Central"/>
</dbReference>
<dbReference type="GO" id="GO:0030867">
    <property type="term" value="C:rough endoplasmic reticulum membrane"/>
    <property type="evidence" value="ECO:0007669"/>
    <property type="project" value="UniProtKB-SubCell"/>
</dbReference>
<dbReference type="GO" id="GO:0008198">
    <property type="term" value="F:ferrous iron binding"/>
    <property type="evidence" value="ECO:0000315"/>
    <property type="project" value="RGD"/>
</dbReference>
<dbReference type="GO" id="GO:0031418">
    <property type="term" value="F:L-ascorbic acid binding"/>
    <property type="evidence" value="ECO:0000315"/>
    <property type="project" value="RGD"/>
</dbReference>
<dbReference type="GO" id="GO:0042277">
    <property type="term" value="F:peptide binding"/>
    <property type="evidence" value="ECO:0000314"/>
    <property type="project" value="RGD"/>
</dbReference>
<dbReference type="GO" id="GO:0008475">
    <property type="term" value="F:procollagen-lysine 5-dioxygenase activity"/>
    <property type="evidence" value="ECO:0000314"/>
    <property type="project" value="RGD"/>
</dbReference>
<dbReference type="GO" id="GO:0032870">
    <property type="term" value="P:cellular response to hormone stimulus"/>
    <property type="evidence" value="ECO:0000270"/>
    <property type="project" value="RGD"/>
</dbReference>
<dbReference type="GO" id="GO:0030199">
    <property type="term" value="P:collagen fibril organization"/>
    <property type="evidence" value="ECO:0000318"/>
    <property type="project" value="GO_Central"/>
</dbReference>
<dbReference type="GO" id="GO:0008544">
    <property type="term" value="P:epidermis development"/>
    <property type="evidence" value="ECO:0000266"/>
    <property type="project" value="RGD"/>
</dbReference>
<dbReference type="GO" id="GO:0017185">
    <property type="term" value="P:peptidyl-lysine hydroxylation"/>
    <property type="evidence" value="ECO:0000314"/>
    <property type="project" value="UniProtKB"/>
</dbReference>
<dbReference type="GO" id="GO:0001666">
    <property type="term" value="P:response to hypoxia"/>
    <property type="evidence" value="ECO:0000270"/>
    <property type="project" value="RGD"/>
</dbReference>
<dbReference type="CDD" id="cd23004">
    <property type="entry name" value="GT_LH1"/>
    <property type="match status" value="1"/>
</dbReference>
<dbReference type="FunFam" id="2.60.120.620:FF:000004">
    <property type="entry name" value="Procollagen-lysine,2-oxoglutarate 5-dioxygenase 2"/>
    <property type="match status" value="1"/>
</dbReference>
<dbReference type="Gene3D" id="2.60.120.620">
    <property type="entry name" value="q2cbj1_9rhob like domain"/>
    <property type="match status" value="1"/>
</dbReference>
<dbReference type="InterPro" id="IPR050757">
    <property type="entry name" value="Collagen_mod_GT25"/>
</dbReference>
<dbReference type="InterPro" id="IPR044861">
    <property type="entry name" value="IPNS-like_FE2OG_OXY"/>
</dbReference>
<dbReference type="InterPro" id="IPR029044">
    <property type="entry name" value="Nucleotide-diphossugar_trans"/>
</dbReference>
<dbReference type="InterPro" id="IPR005123">
    <property type="entry name" value="Oxoglu/Fe-dep_dioxygenase_dom"/>
</dbReference>
<dbReference type="InterPro" id="IPR006620">
    <property type="entry name" value="Pro_4_hyd_alph"/>
</dbReference>
<dbReference type="InterPro" id="IPR001006">
    <property type="entry name" value="Procol_lys_dOase"/>
</dbReference>
<dbReference type="PANTHER" id="PTHR10730:SF5">
    <property type="entry name" value="PROCOLLAGEN-LYSINE,2-OXOGLUTARATE 5-DIOXYGENASE 1"/>
    <property type="match status" value="1"/>
</dbReference>
<dbReference type="PANTHER" id="PTHR10730">
    <property type="entry name" value="PROCOLLAGEN-LYSINE,2-OXOGLUTARATE 5-DIOXYGENASE/GLYCOSYLTRANSFERASE 25 FAMILY MEMBER"/>
    <property type="match status" value="1"/>
</dbReference>
<dbReference type="Pfam" id="PF03171">
    <property type="entry name" value="2OG-FeII_Oxy"/>
    <property type="match status" value="1"/>
</dbReference>
<dbReference type="Pfam" id="PF25342">
    <property type="entry name" value="GT_PLOD"/>
    <property type="match status" value="1"/>
</dbReference>
<dbReference type="Pfam" id="PF25238">
    <property type="entry name" value="OGFOD2-like"/>
    <property type="match status" value="1"/>
</dbReference>
<dbReference type="SMART" id="SM00702">
    <property type="entry name" value="P4Hc"/>
    <property type="match status" value="1"/>
</dbReference>
<dbReference type="SUPFAM" id="SSF53448">
    <property type="entry name" value="Nucleotide-diphospho-sugar transferases"/>
    <property type="match status" value="1"/>
</dbReference>
<dbReference type="PROSITE" id="PS51471">
    <property type="entry name" value="FE2OG_OXY"/>
    <property type="match status" value="1"/>
</dbReference>
<dbReference type="PROSITE" id="PS01325">
    <property type="entry name" value="LYS_HYDROXYLASE"/>
    <property type="match status" value="1"/>
</dbReference>
<reference key="1">
    <citation type="journal article" date="1995" name="Biochim. Biophys. Acta">
        <title>Rat lysyl hydroxylase: molecular cloning, mRNA distribution and expression in a baculovirus system.</title>
        <authorList>
            <person name="Armstrong L.C."/>
            <person name="Last J.A."/>
        </authorList>
    </citation>
    <scope>NUCLEOTIDE SEQUENCE [MRNA]</scope>
    <scope>CATALYTIC ACTIVITY</scope>
    <scope>FUNCTION</scope>
    <source>
        <strain>Sprague-Dawley</strain>
        <tissue>Lung</tissue>
    </source>
</reference>
<evidence type="ECO:0000250" key="1"/>
<evidence type="ECO:0000250" key="2">
    <source>
        <dbReference type="UniProtKB" id="P24802"/>
    </source>
</evidence>
<evidence type="ECO:0000250" key="3">
    <source>
        <dbReference type="UniProtKB" id="Q9R0E2"/>
    </source>
</evidence>
<evidence type="ECO:0000255" key="4"/>
<evidence type="ECO:0000255" key="5">
    <source>
        <dbReference type="PROSITE-ProRule" id="PRU00805"/>
    </source>
</evidence>
<evidence type="ECO:0000269" key="6">
    <source>
    </source>
</evidence>
<name>PLOD1_RAT</name>
<sequence length="728" mass="83612">MRSLLLLASLAWLLLAQAKDDAKLEDNLLVLTVATKETEGFRRFKRSAQFFNYKIQSLGLGEDWSAAGGPSAAGGGQKVRLLKKALKKYADKEDLVILFVDSYDVVFASGPRELLKKFQQAKSRVVFSAEELIYPDRRLEAKYPTVPDGKRFLGSGGFIGYAPSLSKLVAEWEGQDNDSDQLFYTKIFLDPEKREQINISLDHRCRIFQNLDGALDEVVLKFEMGHVRARNLAYDTLPVVIHGNGPTKLQVNYLGNYIPRFWTFETGCTVCDEGLRSLKGIGDEALPTVLVGVFIEQPTPFLSLFFRRLLHLRYPQKQMRLFIHNQEQHHKLQVEQFLAEHGGEYQSVKLVGPEVRMANADARNMGADLCRQDQTCTYYFSVDADVALTEPNSLRLLIEQNKNVIAPLMTRHGRLWSNFWGALSADGYYARSEDYVDIVQGRRVGVWNVPYISNIYLIKGSALRAELRHVDLFHYSKLDPDMSFCANVRQQEVFMFLTNRHTFGHLLSLDNYQTTHLHNDLWEVFSNPQDWKEKYIHENYTKALAGKLVETPCPDVYWFPIFTEVACDELVEEMEHYGQWSLGDNKDNRIQGGYENVPTIDIHMNQITFEREWHKFLVEYIAPLTEKLYPGYYTKAQFDLAFVVRYKPDEQPSLMPHHDASTFTINIALNRVGEDYEGGGCRFLRYNCSVRAPRKGWALMHPGRLTHYHEGLPTTKGTRYIAVSFVDP</sequence>
<proteinExistence type="evidence at protein level"/>
<keyword id="KW-0223">Dioxygenase</keyword>
<keyword id="KW-0256">Endoplasmic reticulum</keyword>
<keyword id="KW-0325">Glycoprotein</keyword>
<keyword id="KW-0408">Iron</keyword>
<keyword id="KW-0472">Membrane</keyword>
<keyword id="KW-0479">Metal-binding</keyword>
<keyword id="KW-0560">Oxidoreductase</keyword>
<keyword id="KW-1185">Reference proteome</keyword>
<keyword id="KW-0732">Signal</keyword>
<keyword id="KW-0847">Vitamin C</keyword>
<organism>
    <name type="scientific">Rattus norvegicus</name>
    <name type="common">Rat</name>
    <dbReference type="NCBI Taxonomy" id="10116"/>
    <lineage>
        <taxon>Eukaryota</taxon>
        <taxon>Metazoa</taxon>
        <taxon>Chordata</taxon>
        <taxon>Craniata</taxon>
        <taxon>Vertebrata</taxon>
        <taxon>Euteleostomi</taxon>
        <taxon>Mammalia</taxon>
        <taxon>Eutheria</taxon>
        <taxon>Euarchontoglires</taxon>
        <taxon>Glires</taxon>
        <taxon>Rodentia</taxon>
        <taxon>Myomorpha</taxon>
        <taxon>Muroidea</taxon>
        <taxon>Muridae</taxon>
        <taxon>Murinae</taxon>
        <taxon>Rattus</taxon>
    </lineage>
</organism>
<feature type="signal peptide" evidence="1">
    <location>
        <begin position="1"/>
        <end position="18"/>
    </location>
</feature>
<feature type="chain" id="PRO_0000024681" description="Procollagen-lysine,2-oxoglutarate 5-dioxygenase 1">
    <location>
        <begin position="19"/>
        <end position="728"/>
    </location>
</feature>
<feature type="domain" description="Fe2OG dioxygenase" evidence="5">
    <location>
        <begin position="637"/>
        <end position="728"/>
    </location>
</feature>
<feature type="active site" evidence="4">
    <location>
        <position position="719"/>
    </location>
</feature>
<feature type="binding site" evidence="5">
    <location>
        <position position="657"/>
    </location>
    <ligand>
        <name>Fe cation</name>
        <dbReference type="ChEBI" id="CHEBI:24875"/>
    </ligand>
</feature>
<feature type="binding site" evidence="5">
    <location>
        <position position="659"/>
    </location>
    <ligand>
        <name>Fe cation</name>
        <dbReference type="ChEBI" id="CHEBI:24875"/>
    </ligand>
</feature>
<feature type="binding site" evidence="5">
    <location>
        <position position="709"/>
    </location>
    <ligand>
        <name>Fe cation</name>
        <dbReference type="ChEBI" id="CHEBI:24875"/>
    </ligand>
</feature>
<feature type="glycosylation site" description="N-linked (GlcNAc...) asparagine" evidence="4">
    <location>
        <position position="177"/>
    </location>
</feature>
<feature type="glycosylation site" description="N-linked (GlcNAc...) asparagine" evidence="4">
    <location>
        <position position="198"/>
    </location>
</feature>
<feature type="glycosylation site" description="N-linked (GlcNAc...) asparagine" evidence="4">
    <location>
        <position position="539"/>
    </location>
</feature>
<feature type="glycosylation site" description="N-linked (GlcNAc...) asparagine" evidence="4">
    <location>
        <position position="687"/>
    </location>
</feature>